<reference key="1">
    <citation type="journal article" date="2003" name="Proc. Natl. Acad. Sci. U.S.A.">
        <title>The complete genome sequence of the Arabidopsis and tomato pathogen Pseudomonas syringae pv. tomato DC3000.</title>
        <authorList>
            <person name="Buell C.R."/>
            <person name="Joardar V."/>
            <person name="Lindeberg M."/>
            <person name="Selengut J."/>
            <person name="Paulsen I.T."/>
            <person name="Gwinn M.L."/>
            <person name="Dodson R.J."/>
            <person name="DeBoy R.T."/>
            <person name="Durkin A.S."/>
            <person name="Kolonay J.F."/>
            <person name="Madupu R."/>
            <person name="Daugherty S.C."/>
            <person name="Brinkac L.M."/>
            <person name="Beanan M.J."/>
            <person name="Haft D.H."/>
            <person name="Nelson W.C."/>
            <person name="Davidsen T.M."/>
            <person name="Zafar N."/>
            <person name="Zhou L."/>
            <person name="Liu J."/>
            <person name="Yuan Q."/>
            <person name="Khouri H.M."/>
            <person name="Fedorova N.B."/>
            <person name="Tran B."/>
            <person name="Russell D."/>
            <person name="Berry K.J."/>
            <person name="Utterback T.R."/>
            <person name="Van Aken S.E."/>
            <person name="Feldblyum T.V."/>
            <person name="D'Ascenzo M."/>
            <person name="Deng W.-L."/>
            <person name="Ramos A.R."/>
            <person name="Alfano J.R."/>
            <person name="Cartinhour S."/>
            <person name="Chatterjee A.K."/>
            <person name="Delaney T.P."/>
            <person name="Lazarowitz S.G."/>
            <person name="Martin G.B."/>
            <person name="Schneider D.J."/>
            <person name="Tang X."/>
            <person name="Bender C.L."/>
            <person name="White O."/>
            <person name="Fraser C.M."/>
            <person name="Collmer A."/>
        </authorList>
    </citation>
    <scope>NUCLEOTIDE SEQUENCE [LARGE SCALE GENOMIC DNA]</scope>
    <source>
        <strain>ATCC BAA-871 / DC3000</strain>
    </source>
</reference>
<name>COAD_PSESM</name>
<accession>Q88AH3</accession>
<keyword id="KW-0067">ATP-binding</keyword>
<keyword id="KW-0173">Coenzyme A biosynthesis</keyword>
<keyword id="KW-0963">Cytoplasm</keyword>
<keyword id="KW-0460">Magnesium</keyword>
<keyword id="KW-0547">Nucleotide-binding</keyword>
<keyword id="KW-0548">Nucleotidyltransferase</keyword>
<keyword id="KW-1185">Reference proteome</keyword>
<keyword id="KW-0808">Transferase</keyword>
<evidence type="ECO:0000255" key="1">
    <source>
        <dbReference type="HAMAP-Rule" id="MF_00151"/>
    </source>
</evidence>
<organism>
    <name type="scientific">Pseudomonas syringae pv. tomato (strain ATCC BAA-871 / DC3000)</name>
    <dbReference type="NCBI Taxonomy" id="223283"/>
    <lineage>
        <taxon>Bacteria</taxon>
        <taxon>Pseudomonadati</taxon>
        <taxon>Pseudomonadota</taxon>
        <taxon>Gammaproteobacteria</taxon>
        <taxon>Pseudomonadales</taxon>
        <taxon>Pseudomonadaceae</taxon>
        <taxon>Pseudomonas</taxon>
    </lineage>
</organism>
<feature type="chain" id="PRO_0000156260" description="Phosphopantetheine adenylyltransferase">
    <location>
        <begin position="1"/>
        <end position="159"/>
    </location>
</feature>
<feature type="binding site" evidence="1">
    <location>
        <begin position="9"/>
        <end position="10"/>
    </location>
    <ligand>
        <name>ATP</name>
        <dbReference type="ChEBI" id="CHEBI:30616"/>
    </ligand>
</feature>
<feature type="binding site" evidence="1">
    <location>
        <position position="9"/>
    </location>
    <ligand>
        <name>substrate</name>
    </ligand>
</feature>
<feature type="binding site" evidence="1">
    <location>
        <position position="17"/>
    </location>
    <ligand>
        <name>ATP</name>
        <dbReference type="ChEBI" id="CHEBI:30616"/>
    </ligand>
</feature>
<feature type="binding site" evidence="1">
    <location>
        <position position="41"/>
    </location>
    <ligand>
        <name>substrate</name>
    </ligand>
</feature>
<feature type="binding site" evidence="1">
    <location>
        <position position="73"/>
    </location>
    <ligand>
        <name>substrate</name>
    </ligand>
</feature>
<feature type="binding site" evidence="1">
    <location>
        <position position="87"/>
    </location>
    <ligand>
        <name>substrate</name>
    </ligand>
</feature>
<feature type="binding site" evidence="1">
    <location>
        <begin position="88"/>
        <end position="90"/>
    </location>
    <ligand>
        <name>ATP</name>
        <dbReference type="ChEBI" id="CHEBI:30616"/>
    </ligand>
</feature>
<feature type="binding site" evidence="1">
    <location>
        <position position="98"/>
    </location>
    <ligand>
        <name>ATP</name>
        <dbReference type="ChEBI" id="CHEBI:30616"/>
    </ligand>
</feature>
<feature type="binding site" evidence="1">
    <location>
        <begin position="123"/>
        <end position="129"/>
    </location>
    <ligand>
        <name>ATP</name>
        <dbReference type="ChEBI" id="CHEBI:30616"/>
    </ligand>
</feature>
<feature type="site" description="Transition state stabilizer" evidence="1">
    <location>
        <position position="17"/>
    </location>
</feature>
<gene>
    <name evidence="1" type="primary">coaD</name>
    <name type="ordered locus">PSPTO_0417</name>
</gene>
<proteinExistence type="inferred from homology"/>
<protein>
    <recommendedName>
        <fullName evidence="1">Phosphopantetheine adenylyltransferase</fullName>
        <ecNumber evidence="1">2.7.7.3</ecNumber>
    </recommendedName>
    <alternativeName>
        <fullName evidence="1">Dephospho-CoA pyrophosphorylase</fullName>
    </alternativeName>
    <alternativeName>
        <fullName evidence="1">Pantetheine-phosphate adenylyltransferase</fullName>
        <shortName evidence="1">PPAT</shortName>
    </alternativeName>
</protein>
<comment type="function">
    <text evidence="1">Reversibly transfers an adenylyl group from ATP to 4'-phosphopantetheine, yielding dephospho-CoA (dPCoA) and pyrophosphate.</text>
</comment>
<comment type="catalytic activity">
    <reaction evidence="1">
        <text>(R)-4'-phosphopantetheine + ATP + H(+) = 3'-dephospho-CoA + diphosphate</text>
        <dbReference type="Rhea" id="RHEA:19801"/>
        <dbReference type="ChEBI" id="CHEBI:15378"/>
        <dbReference type="ChEBI" id="CHEBI:30616"/>
        <dbReference type="ChEBI" id="CHEBI:33019"/>
        <dbReference type="ChEBI" id="CHEBI:57328"/>
        <dbReference type="ChEBI" id="CHEBI:61723"/>
        <dbReference type="EC" id="2.7.7.3"/>
    </reaction>
</comment>
<comment type="cofactor">
    <cofactor evidence="1">
        <name>Mg(2+)</name>
        <dbReference type="ChEBI" id="CHEBI:18420"/>
    </cofactor>
</comment>
<comment type="pathway">
    <text evidence="1">Cofactor biosynthesis; coenzyme A biosynthesis; CoA from (R)-pantothenate: step 4/5.</text>
</comment>
<comment type="subunit">
    <text evidence="1">Homohexamer.</text>
</comment>
<comment type="subcellular location">
    <subcellularLocation>
        <location evidence="1">Cytoplasm</location>
    </subcellularLocation>
</comment>
<comment type="similarity">
    <text evidence="1">Belongs to the bacterial CoaD family.</text>
</comment>
<dbReference type="EC" id="2.7.7.3" evidence="1"/>
<dbReference type="EMBL" id="AE016853">
    <property type="protein sequence ID" value="AAO53961.1"/>
    <property type="molecule type" value="Genomic_DNA"/>
</dbReference>
<dbReference type="RefSeq" id="NP_790266.1">
    <property type="nucleotide sequence ID" value="NC_004578.1"/>
</dbReference>
<dbReference type="RefSeq" id="WP_005737440.1">
    <property type="nucleotide sequence ID" value="NC_004578.1"/>
</dbReference>
<dbReference type="SMR" id="Q88AH3"/>
<dbReference type="STRING" id="223283.PSPTO_0417"/>
<dbReference type="GeneID" id="1182026"/>
<dbReference type="KEGG" id="pst:PSPTO_0417"/>
<dbReference type="PATRIC" id="fig|223283.9.peg.437"/>
<dbReference type="eggNOG" id="COG0669">
    <property type="taxonomic scope" value="Bacteria"/>
</dbReference>
<dbReference type="HOGENOM" id="CLU_100149_0_1_6"/>
<dbReference type="OrthoDB" id="9806661at2"/>
<dbReference type="PhylomeDB" id="Q88AH3"/>
<dbReference type="UniPathway" id="UPA00241">
    <property type="reaction ID" value="UER00355"/>
</dbReference>
<dbReference type="Proteomes" id="UP000002515">
    <property type="component" value="Chromosome"/>
</dbReference>
<dbReference type="GO" id="GO:0005737">
    <property type="term" value="C:cytoplasm"/>
    <property type="evidence" value="ECO:0007669"/>
    <property type="project" value="UniProtKB-SubCell"/>
</dbReference>
<dbReference type="GO" id="GO:0005524">
    <property type="term" value="F:ATP binding"/>
    <property type="evidence" value="ECO:0007669"/>
    <property type="project" value="UniProtKB-KW"/>
</dbReference>
<dbReference type="GO" id="GO:0004595">
    <property type="term" value="F:pantetheine-phosphate adenylyltransferase activity"/>
    <property type="evidence" value="ECO:0007669"/>
    <property type="project" value="UniProtKB-UniRule"/>
</dbReference>
<dbReference type="GO" id="GO:0015937">
    <property type="term" value="P:coenzyme A biosynthetic process"/>
    <property type="evidence" value="ECO:0007669"/>
    <property type="project" value="UniProtKB-UniRule"/>
</dbReference>
<dbReference type="CDD" id="cd02163">
    <property type="entry name" value="PPAT"/>
    <property type="match status" value="1"/>
</dbReference>
<dbReference type="Gene3D" id="3.40.50.620">
    <property type="entry name" value="HUPs"/>
    <property type="match status" value="1"/>
</dbReference>
<dbReference type="HAMAP" id="MF_00151">
    <property type="entry name" value="PPAT_bact"/>
    <property type="match status" value="1"/>
</dbReference>
<dbReference type="InterPro" id="IPR004821">
    <property type="entry name" value="Cyt_trans-like"/>
</dbReference>
<dbReference type="InterPro" id="IPR001980">
    <property type="entry name" value="PPAT"/>
</dbReference>
<dbReference type="InterPro" id="IPR014729">
    <property type="entry name" value="Rossmann-like_a/b/a_fold"/>
</dbReference>
<dbReference type="NCBIfam" id="TIGR01510">
    <property type="entry name" value="coaD_prev_kdtB"/>
    <property type="match status" value="1"/>
</dbReference>
<dbReference type="NCBIfam" id="TIGR00125">
    <property type="entry name" value="cyt_tran_rel"/>
    <property type="match status" value="1"/>
</dbReference>
<dbReference type="PANTHER" id="PTHR21342">
    <property type="entry name" value="PHOSPHOPANTETHEINE ADENYLYLTRANSFERASE"/>
    <property type="match status" value="1"/>
</dbReference>
<dbReference type="PANTHER" id="PTHR21342:SF1">
    <property type="entry name" value="PHOSPHOPANTETHEINE ADENYLYLTRANSFERASE"/>
    <property type="match status" value="1"/>
</dbReference>
<dbReference type="Pfam" id="PF01467">
    <property type="entry name" value="CTP_transf_like"/>
    <property type="match status" value="1"/>
</dbReference>
<dbReference type="PRINTS" id="PR01020">
    <property type="entry name" value="LPSBIOSNTHSS"/>
</dbReference>
<dbReference type="SUPFAM" id="SSF52374">
    <property type="entry name" value="Nucleotidylyl transferase"/>
    <property type="match status" value="1"/>
</dbReference>
<sequence length="159" mass="17886">MNRVLYPGTFDPITKGHGDLVERASRLFDQVVIAVAASPKKNPLFPLEQRVELAREVTKHLPNVEVVGFSTLLAHFAKEQNANVFLRGLRAVSDFEYEFQLANMNRQLAPDVESLFLTPSERYSFISSTLVREIATLGGDITKFVHPAVAQALTERFKR</sequence>